<dbReference type="EC" id="2.7.4.22" evidence="1"/>
<dbReference type="EMBL" id="AE017332">
    <property type="protein sequence ID" value="AAV27952.1"/>
    <property type="molecule type" value="Genomic_DNA"/>
</dbReference>
<dbReference type="RefSeq" id="WP_011206385.1">
    <property type="nucleotide sequence ID" value="NC_006360.1"/>
</dbReference>
<dbReference type="SMR" id="Q600A4"/>
<dbReference type="GeneID" id="41334835"/>
<dbReference type="KEGG" id="mhy:mhp552"/>
<dbReference type="eggNOG" id="COG0528">
    <property type="taxonomic scope" value="Bacteria"/>
</dbReference>
<dbReference type="HOGENOM" id="CLU_033861_0_1_14"/>
<dbReference type="PhylomeDB" id="Q600A4"/>
<dbReference type="UniPathway" id="UPA00159">
    <property type="reaction ID" value="UER00275"/>
</dbReference>
<dbReference type="Proteomes" id="UP000006822">
    <property type="component" value="Chromosome"/>
</dbReference>
<dbReference type="GO" id="GO:0005737">
    <property type="term" value="C:cytoplasm"/>
    <property type="evidence" value="ECO:0007669"/>
    <property type="project" value="UniProtKB-SubCell"/>
</dbReference>
<dbReference type="GO" id="GO:0005524">
    <property type="term" value="F:ATP binding"/>
    <property type="evidence" value="ECO:0007669"/>
    <property type="project" value="UniProtKB-KW"/>
</dbReference>
<dbReference type="GO" id="GO:0033862">
    <property type="term" value="F:UMP kinase activity"/>
    <property type="evidence" value="ECO:0007669"/>
    <property type="project" value="UniProtKB-EC"/>
</dbReference>
<dbReference type="GO" id="GO:0044210">
    <property type="term" value="P:'de novo' CTP biosynthetic process"/>
    <property type="evidence" value="ECO:0007669"/>
    <property type="project" value="UniProtKB-UniRule"/>
</dbReference>
<dbReference type="GO" id="GO:0006225">
    <property type="term" value="P:UDP biosynthetic process"/>
    <property type="evidence" value="ECO:0007669"/>
    <property type="project" value="TreeGrafter"/>
</dbReference>
<dbReference type="CDD" id="cd04254">
    <property type="entry name" value="AAK_UMPK-PyrH-Ec"/>
    <property type="match status" value="1"/>
</dbReference>
<dbReference type="FunFam" id="3.40.1160.10:FF:000001">
    <property type="entry name" value="Uridylate kinase"/>
    <property type="match status" value="1"/>
</dbReference>
<dbReference type="Gene3D" id="3.40.1160.10">
    <property type="entry name" value="Acetylglutamate kinase-like"/>
    <property type="match status" value="1"/>
</dbReference>
<dbReference type="HAMAP" id="MF_01220_B">
    <property type="entry name" value="PyrH_B"/>
    <property type="match status" value="1"/>
</dbReference>
<dbReference type="InterPro" id="IPR036393">
    <property type="entry name" value="AceGlu_kinase-like_sf"/>
</dbReference>
<dbReference type="InterPro" id="IPR001048">
    <property type="entry name" value="Asp/Glu/Uridylate_kinase"/>
</dbReference>
<dbReference type="InterPro" id="IPR011817">
    <property type="entry name" value="Uridylate_kinase"/>
</dbReference>
<dbReference type="InterPro" id="IPR015963">
    <property type="entry name" value="Uridylate_kinase_bac"/>
</dbReference>
<dbReference type="NCBIfam" id="TIGR02075">
    <property type="entry name" value="pyrH_bact"/>
    <property type="match status" value="1"/>
</dbReference>
<dbReference type="PANTHER" id="PTHR42833">
    <property type="entry name" value="URIDYLATE KINASE"/>
    <property type="match status" value="1"/>
</dbReference>
<dbReference type="PANTHER" id="PTHR42833:SF4">
    <property type="entry name" value="URIDYLATE KINASE PUMPKIN, CHLOROPLASTIC"/>
    <property type="match status" value="1"/>
</dbReference>
<dbReference type="Pfam" id="PF00696">
    <property type="entry name" value="AA_kinase"/>
    <property type="match status" value="1"/>
</dbReference>
<dbReference type="PIRSF" id="PIRSF005650">
    <property type="entry name" value="Uridylate_kin"/>
    <property type="match status" value="1"/>
</dbReference>
<dbReference type="SUPFAM" id="SSF53633">
    <property type="entry name" value="Carbamate kinase-like"/>
    <property type="match status" value="1"/>
</dbReference>
<name>PYRH_MESH2</name>
<reference key="1">
    <citation type="journal article" date="2004" name="J. Bacteriol.">
        <title>The genome sequence of Mycoplasma hyopneumoniae strain 232, the agent of swine mycoplasmosis.</title>
        <authorList>
            <person name="Minion F.C."/>
            <person name="Lefkowitz E.J."/>
            <person name="Madsen M.L."/>
            <person name="Cleary B.J."/>
            <person name="Swartzell S.M."/>
            <person name="Mahairas G.G."/>
        </authorList>
    </citation>
    <scope>NUCLEOTIDE SEQUENCE [LARGE SCALE GENOMIC DNA]</scope>
    <source>
        <strain>232</strain>
    </source>
</reference>
<gene>
    <name evidence="1" type="primary">pyrH</name>
    <name type="ordered locus">mhp552</name>
</gene>
<comment type="function">
    <text evidence="1">Catalyzes the reversible phosphorylation of UMP to UDP.</text>
</comment>
<comment type="catalytic activity">
    <reaction evidence="1">
        <text>UMP + ATP = UDP + ADP</text>
        <dbReference type="Rhea" id="RHEA:24400"/>
        <dbReference type="ChEBI" id="CHEBI:30616"/>
        <dbReference type="ChEBI" id="CHEBI:57865"/>
        <dbReference type="ChEBI" id="CHEBI:58223"/>
        <dbReference type="ChEBI" id="CHEBI:456216"/>
        <dbReference type="EC" id="2.7.4.22"/>
    </reaction>
</comment>
<comment type="activity regulation">
    <text evidence="1">Inhibited by UTP.</text>
</comment>
<comment type="pathway">
    <text evidence="1">Pyrimidine metabolism; CTP biosynthesis via de novo pathway; UDP from UMP (UMPK route): step 1/1.</text>
</comment>
<comment type="subunit">
    <text evidence="1">Homohexamer.</text>
</comment>
<comment type="subcellular location">
    <subcellularLocation>
        <location evidence="1">Cytoplasm</location>
    </subcellularLocation>
</comment>
<comment type="similarity">
    <text evidence="1">Belongs to the UMP kinase family.</text>
</comment>
<evidence type="ECO:0000255" key="1">
    <source>
        <dbReference type="HAMAP-Rule" id="MF_01220"/>
    </source>
</evidence>
<sequence length="236" mass="26319">MDSTILIKLSGESLANKQKSLAIDYELVRQIGSQLKEIQNLGHKILIVIGGGNFWRGTSAAKNGINRNTADYIGMLGTVMNGLALDSVFRDLGIKTRVLSSMSLDPRICEYFVREKAMKYLEDNNVLIFVGGTGRPFFTTDSAATLFASEMGANIILVGKNNVNGIFDSDPKINPNALRYDKITYNQVIEKNLKVMDSTAFSMARDNKIKLLIFDIKEKNSISKLIKRQIKHTEVY</sequence>
<feature type="chain" id="PRO_0000323894" description="Uridylate kinase">
    <location>
        <begin position="1"/>
        <end position="236"/>
    </location>
</feature>
<feature type="binding site" evidence="1">
    <location>
        <begin position="8"/>
        <end position="11"/>
    </location>
    <ligand>
        <name>ATP</name>
        <dbReference type="ChEBI" id="CHEBI:30616"/>
    </ligand>
</feature>
<feature type="binding site" evidence="1">
    <location>
        <position position="51"/>
    </location>
    <ligand>
        <name>UMP</name>
        <dbReference type="ChEBI" id="CHEBI:57865"/>
    </ligand>
</feature>
<feature type="binding site" evidence="1">
    <location>
        <position position="52"/>
    </location>
    <ligand>
        <name>ATP</name>
        <dbReference type="ChEBI" id="CHEBI:30616"/>
    </ligand>
</feature>
<feature type="binding site" evidence="1">
    <location>
        <position position="56"/>
    </location>
    <ligand>
        <name>ATP</name>
        <dbReference type="ChEBI" id="CHEBI:30616"/>
    </ligand>
</feature>
<feature type="binding site" evidence="1">
    <location>
        <position position="71"/>
    </location>
    <ligand>
        <name>UMP</name>
        <dbReference type="ChEBI" id="CHEBI:57865"/>
    </ligand>
</feature>
<feature type="binding site" evidence="1">
    <location>
        <begin position="133"/>
        <end position="140"/>
    </location>
    <ligand>
        <name>UMP</name>
        <dbReference type="ChEBI" id="CHEBI:57865"/>
    </ligand>
</feature>
<feature type="binding site" evidence="1">
    <location>
        <position position="161"/>
    </location>
    <ligand>
        <name>ATP</name>
        <dbReference type="ChEBI" id="CHEBI:30616"/>
    </ligand>
</feature>
<feature type="binding site" evidence="1">
    <location>
        <position position="167"/>
    </location>
    <ligand>
        <name>ATP</name>
        <dbReference type="ChEBI" id="CHEBI:30616"/>
    </ligand>
</feature>
<feature type="binding site" evidence="1">
    <location>
        <position position="170"/>
    </location>
    <ligand>
        <name>ATP</name>
        <dbReference type="ChEBI" id="CHEBI:30616"/>
    </ligand>
</feature>
<accession>Q600A4</accession>
<proteinExistence type="inferred from homology"/>
<protein>
    <recommendedName>
        <fullName evidence="1">Uridylate kinase</fullName>
        <shortName evidence="1">UK</shortName>
        <ecNumber evidence="1">2.7.4.22</ecNumber>
    </recommendedName>
    <alternativeName>
        <fullName evidence="1">Uridine monophosphate kinase</fullName>
        <shortName evidence="1">UMP kinase</shortName>
        <shortName evidence="1">UMPK</shortName>
    </alternativeName>
</protein>
<organism>
    <name type="scientific">Mesomycoplasma hyopneumoniae (strain 232)</name>
    <name type="common">Mycoplasma hyopneumoniae</name>
    <dbReference type="NCBI Taxonomy" id="295358"/>
    <lineage>
        <taxon>Bacteria</taxon>
        <taxon>Bacillati</taxon>
        <taxon>Mycoplasmatota</taxon>
        <taxon>Mycoplasmoidales</taxon>
        <taxon>Metamycoplasmataceae</taxon>
        <taxon>Mesomycoplasma</taxon>
    </lineage>
</organism>
<keyword id="KW-0067">ATP-binding</keyword>
<keyword id="KW-0963">Cytoplasm</keyword>
<keyword id="KW-0418">Kinase</keyword>
<keyword id="KW-0547">Nucleotide-binding</keyword>
<keyword id="KW-0665">Pyrimidine biosynthesis</keyword>
<keyword id="KW-0808">Transferase</keyword>